<protein>
    <recommendedName>
        <fullName evidence="1">RNA-binding protein Hfq</fullName>
    </recommendedName>
</protein>
<accession>Q28Q51</accession>
<dbReference type="EMBL" id="CP000264">
    <property type="protein sequence ID" value="ABD55161.1"/>
    <property type="molecule type" value="Genomic_DNA"/>
</dbReference>
<dbReference type="RefSeq" id="WP_011455365.1">
    <property type="nucleotide sequence ID" value="NC_007802.1"/>
</dbReference>
<dbReference type="SMR" id="Q28Q51"/>
<dbReference type="STRING" id="290400.Jann_2244"/>
<dbReference type="KEGG" id="jan:Jann_2244"/>
<dbReference type="eggNOG" id="COG1923">
    <property type="taxonomic scope" value="Bacteria"/>
</dbReference>
<dbReference type="HOGENOM" id="CLU_113688_0_0_5"/>
<dbReference type="OrthoDB" id="9799751at2"/>
<dbReference type="Proteomes" id="UP000008326">
    <property type="component" value="Chromosome"/>
</dbReference>
<dbReference type="GO" id="GO:0005829">
    <property type="term" value="C:cytosol"/>
    <property type="evidence" value="ECO:0007669"/>
    <property type="project" value="TreeGrafter"/>
</dbReference>
<dbReference type="GO" id="GO:0003723">
    <property type="term" value="F:RNA binding"/>
    <property type="evidence" value="ECO:0007669"/>
    <property type="project" value="UniProtKB-UniRule"/>
</dbReference>
<dbReference type="GO" id="GO:0006355">
    <property type="term" value="P:regulation of DNA-templated transcription"/>
    <property type="evidence" value="ECO:0007669"/>
    <property type="project" value="InterPro"/>
</dbReference>
<dbReference type="GO" id="GO:0043487">
    <property type="term" value="P:regulation of RNA stability"/>
    <property type="evidence" value="ECO:0007669"/>
    <property type="project" value="TreeGrafter"/>
</dbReference>
<dbReference type="GO" id="GO:0045974">
    <property type="term" value="P:regulation of translation, ncRNA-mediated"/>
    <property type="evidence" value="ECO:0007669"/>
    <property type="project" value="TreeGrafter"/>
</dbReference>
<dbReference type="CDD" id="cd01716">
    <property type="entry name" value="Hfq"/>
    <property type="match status" value="1"/>
</dbReference>
<dbReference type="FunFam" id="2.30.30.100:FF:000001">
    <property type="entry name" value="RNA-binding protein Hfq"/>
    <property type="match status" value="1"/>
</dbReference>
<dbReference type="Gene3D" id="2.30.30.100">
    <property type="match status" value="1"/>
</dbReference>
<dbReference type="HAMAP" id="MF_00436">
    <property type="entry name" value="Hfq"/>
    <property type="match status" value="1"/>
</dbReference>
<dbReference type="InterPro" id="IPR005001">
    <property type="entry name" value="Hfq"/>
</dbReference>
<dbReference type="InterPro" id="IPR010920">
    <property type="entry name" value="LSM_dom_sf"/>
</dbReference>
<dbReference type="InterPro" id="IPR047575">
    <property type="entry name" value="Sm"/>
</dbReference>
<dbReference type="NCBIfam" id="TIGR02383">
    <property type="entry name" value="Hfq"/>
    <property type="match status" value="1"/>
</dbReference>
<dbReference type="NCBIfam" id="NF001602">
    <property type="entry name" value="PRK00395.1"/>
    <property type="match status" value="1"/>
</dbReference>
<dbReference type="PANTHER" id="PTHR34772">
    <property type="entry name" value="RNA-BINDING PROTEIN HFQ"/>
    <property type="match status" value="1"/>
</dbReference>
<dbReference type="PANTHER" id="PTHR34772:SF1">
    <property type="entry name" value="RNA-BINDING PROTEIN HFQ"/>
    <property type="match status" value="1"/>
</dbReference>
<dbReference type="Pfam" id="PF17209">
    <property type="entry name" value="Hfq"/>
    <property type="match status" value="1"/>
</dbReference>
<dbReference type="SUPFAM" id="SSF50182">
    <property type="entry name" value="Sm-like ribonucleoproteins"/>
    <property type="match status" value="1"/>
</dbReference>
<dbReference type="PROSITE" id="PS52002">
    <property type="entry name" value="SM"/>
    <property type="match status" value="1"/>
</dbReference>
<comment type="function">
    <text evidence="1">RNA chaperone that binds small regulatory RNA (sRNAs) and mRNAs to facilitate mRNA translational regulation in response to envelope stress, environmental stress and changes in metabolite concentrations. Also binds with high specificity to tRNAs.</text>
</comment>
<comment type="subunit">
    <text evidence="1">Homohexamer.</text>
</comment>
<comment type="similarity">
    <text evidence="1">Belongs to the Hfq family.</text>
</comment>
<name>HFQ_JANSC</name>
<keyword id="KW-1185">Reference proteome</keyword>
<keyword id="KW-0694">RNA-binding</keyword>
<keyword id="KW-0346">Stress response</keyword>
<sequence length="77" mass="8789">MAENKQNLQDAFLNHVRKTKVPVTIFLINGVKLQGVITWFDNFCVLLRRDGQSQLVYKHAISTVMPAQPISLYDGEE</sequence>
<evidence type="ECO:0000255" key="1">
    <source>
        <dbReference type="HAMAP-Rule" id="MF_00436"/>
    </source>
</evidence>
<evidence type="ECO:0000255" key="2">
    <source>
        <dbReference type="PROSITE-ProRule" id="PRU01346"/>
    </source>
</evidence>
<proteinExistence type="inferred from homology"/>
<feature type="chain" id="PRO_1000080669" description="RNA-binding protein Hfq">
    <location>
        <begin position="1"/>
        <end position="77"/>
    </location>
</feature>
<feature type="domain" description="Sm" evidence="2">
    <location>
        <begin position="10"/>
        <end position="70"/>
    </location>
</feature>
<reference key="1">
    <citation type="submission" date="2006-02" db="EMBL/GenBank/DDBJ databases">
        <title>Complete sequence of chromosome of Jannaschia sp. CCS1.</title>
        <authorList>
            <consortium name="US DOE Joint Genome Institute"/>
            <person name="Copeland A."/>
            <person name="Lucas S."/>
            <person name="Lapidus A."/>
            <person name="Barry K."/>
            <person name="Detter J.C."/>
            <person name="Glavina del Rio T."/>
            <person name="Hammon N."/>
            <person name="Israni S."/>
            <person name="Pitluck S."/>
            <person name="Brettin T."/>
            <person name="Bruce D."/>
            <person name="Han C."/>
            <person name="Tapia R."/>
            <person name="Gilna P."/>
            <person name="Chertkov O."/>
            <person name="Saunders E."/>
            <person name="Schmutz J."/>
            <person name="Larimer F."/>
            <person name="Land M."/>
            <person name="Kyrpides N."/>
            <person name="Lykidis A."/>
            <person name="Moran M.A."/>
            <person name="Belas R."/>
            <person name="Ye W."/>
            <person name="Buchan A."/>
            <person name="Gonzalez J.M."/>
            <person name="Schell M.A."/>
            <person name="Richardson P."/>
        </authorList>
    </citation>
    <scope>NUCLEOTIDE SEQUENCE [LARGE SCALE GENOMIC DNA]</scope>
    <source>
        <strain>CCS1</strain>
    </source>
</reference>
<organism>
    <name type="scientific">Jannaschia sp. (strain CCS1)</name>
    <dbReference type="NCBI Taxonomy" id="290400"/>
    <lineage>
        <taxon>Bacteria</taxon>
        <taxon>Pseudomonadati</taxon>
        <taxon>Pseudomonadota</taxon>
        <taxon>Alphaproteobacteria</taxon>
        <taxon>Rhodobacterales</taxon>
        <taxon>Roseobacteraceae</taxon>
        <taxon>Jannaschia</taxon>
    </lineage>
</organism>
<gene>
    <name evidence="1" type="primary">hfq</name>
    <name type="ordered locus">Jann_2244</name>
</gene>